<dbReference type="EMBL" id="CP000083">
    <property type="protein sequence ID" value="AAZ26994.1"/>
    <property type="molecule type" value="Genomic_DNA"/>
</dbReference>
<dbReference type="RefSeq" id="WP_011045322.1">
    <property type="nucleotide sequence ID" value="NC_003910.7"/>
</dbReference>
<dbReference type="SMR" id="Q47VD1"/>
<dbReference type="STRING" id="167879.CPS_4594"/>
<dbReference type="KEGG" id="cps:CPS_4594"/>
<dbReference type="eggNOG" id="COG1281">
    <property type="taxonomic scope" value="Bacteria"/>
</dbReference>
<dbReference type="HOGENOM" id="CLU_054493_0_0_6"/>
<dbReference type="Proteomes" id="UP000000547">
    <property type="component" value="Chromosome"/>
</dbReference>
<dbReference type="GO" id="GO:0005737">
    <property type="term" value="C:cytoplasm"/>
    <property type="evidence" value="ECO:0007669"/>
    <property type="project" value="UniProtKB-SubCell"/>
</dbReference>
<dbReference type="GO" id="GO:0044183">
    <property type="term" value="F:protein folding chaperone"/>
    <property type="evidence" value="ECO:0007669"/>
    <property type="project" value="TreeGrafter"/>
</dbReference>
<dbReference type="GO" id="GO:0051082">
    <property type="term" value="F:unfolded protein binding"/>
    <property type="evidence" value="ECO:0007669"/>
    <property type="project" value="UniProtKB-UniRule"/>
</dbReference>
<dbReference type="GO" id="GO:0042026">
    <property type="term" value="P:protein refolding"/>
    <property type="evidence" value="ECO:0007669"/>
    <property type="project" value="TreeGrafter"/>
</dbReference>
<dbReference type="CDD" id="cd00498">
    <property type="entry name" value="Hsp33"/>
    <property type="match status" value="1"/>
</dbReference>
<dbReference type="Gene3D" id="1.10.287.480">
    <property type="entry name" value="helix hairpin bin"/>
    <property type="match status" value="1"/>
</dbReference>
<dbReference type="Gene3D" id="3.55.30.10">
    <property type="entry name" value="Hsp33 domain"/>
    <property type="match status" value="1"/>
</dbReference>
<dbReference type="Gene3D" id="3.90.1280.10">
    <property type="entry name" value="HSP33 redox switch-like"/>
    <property type="match status" value="1"/>
</dbReference>
<dbReference type="HAMAP" id="MF_00117">
    <property type="entry name" value="HslO"/>
    <property type="match status" value="1"/>
</dbReference>
<dbReference type="InterPro" id="IPR000397">
    <property type="entry name" value="Heat_shock_Hsp33"/>
</dbReference>
<dbReference type="InterPro" id="IPR016154">
    <property type="entry name" value="Heat_shock_Hsp33_C"/>
</dbReference>
<dbReference type="InterPro" id="IPR016153">
    <property type="entry name" value="Heat_shock_Hsp33_N"/>
</dbReference>
<dbReference type="InterPro" id="IPR023212">
    <property type="entry name" value="Hsp33_helix_hairpin_bin_dom_sf"/>
</dbReference>
<dbReference type="NCBIfam" id="NF001033">
    <property type="entry name" value="PRK00114.1"/>
    <property type="match status" value="1"/>
</dbReference>
<dbReference type="PANTHER" id="PTHR30111">
    <property type="entry name" value="33 KDA CHAPERONIN"/>
    <property type="match status" value="1"/>
</dbReference>
<dbReference type="PANTHER" id="PTHR30111:SF1">
    <property type="entry name" value="33 KDA CHAPERONIN"/>
    <property type="match status" value="1"/>
</dbReference>
<dbReference type="Pfam" id="PF01430">
    <property type="entry name" value="HSP33"/>
    <property type="match status" value="1"/>
</dbReference>
<dbReference type="PIRSF" id="PIRSF005261">
    <property type="entry name" value="Heat_shock_Hsp33"/>
    <property type="match status" value="1"/>
</dbReference>
<dbReference type="SUPFAM" id="SSF64397">
    <property type="entry name" value="Hsp33 domain"/>
    <property type="match status" value="1"/>
</dbReference>
<dbReference type="SUPFAM" id="SSF118352">
    <property type="entry name" value="HSP33 redox switch-like"/>
    <property type="match status" value="1"/>
</dbReference>
<organism>
    <name type="scientific">Colwellia psychrerythraea (strain 34H / ATCC BAA-681)</name>
    <name type="common">Vibrio psychroerythus</name>
    <dbReference type="NCBI Taxonomy" id="167879"/>
    <lineage>
        <taxon>Bacteria</taxon>
        <taxon>Pseudomonadati</taxon>
        <taxon>Pseudomonadota</taxon>
        <taxon>Gammaproteobacteria</taxon>
        <taxon>Alteromonadales</taxon>
        <taxon>Colwelliaceae</taxon>
        <taxon>Colwellia</taxon>
    </lineage>
</organism>
<comment type="function">
    <text evidence="1">Redox regulated molecular chaperone. Protects both thermally unfolding and oxidatively damaged proteins from irreversible aggregation. Plays an important role in the bacterial defense system toward oxidative stress.</text>
</comment>
<comment type="subcellular location">
    <subcellularLocation>
        <location evidence="1">Cytoplasm</location>
    </subcellularLocation>
</comment>
<comment type="PTM">
    <text evidence="1">Under oxidizing conditions two disulfide bonds are formed involving the reactive cysteines. Under reducing conditions zinc is bound to the reactive cysteines and the protein is inactive.</text>
</comment>
<comment type="similarity">
    <text evidence="1">Belongs to the HSP33 family.</text>
</comment>
<protein>
    <recommendedName>
        <fullName evidence="1">33 kDa chaperonin</fullName>
    </recommendedName>
    <alternativeName>
        <fullName evidence="1">Heat shock protein 33 homolog</fullName>
        <shortName evidence="1">HSP33</shortName>
    </alternativeName>
</protein>
<evidence type="ECO:0000255" key="1">
    <source>
        <dbReference type="HAMAP-Rule" id="MF_00117"/>
    </source>
</evidence>
<accession>Q47VD1</accession>
<reference key="1">
    <citation type="journal article" date="2005" name="Proc. Natl. Acad. Sci. U.S.A.">
        <title>The psychrophilic lifestyle as revealed by the genome sequence of Colwellia psychrerythraea 34H through genomic and proteomic analyses.</title>
        <authorList>
            <person name="Methe B.A."/>
            <person name="Nelson K.E."/>
            <person name="Deming J.W."/>
            <person name="Momen B."/>
            <person name="Melamud E."/>
            <person name="Zhang X."/>
            <person name="Moult J."/>
            <person name="Madupu R."/>
            <person name="Nelson W.C."/>
            <person name="Dodson R.J."/>
            <person name="Brinkac L.M."/>
            <person name="Daugherty S.C."/>
            <person name="Durkin A.S."/>
            <person name="DeBoy R.T."/>
            <person name="Kolonay J.F."/>
            <person name="Sullivan S.A."/>
            <person name="Zhou L."/>
            <person name="Davidsen T.M."/>
            <person name="Wu M."/>
            <person name="Huston A.L."/>
            <person name="Lewis M."/>
            <person name="Weaver B."/>
            <person name="Weidman J.F."/>
            <person name="Khouri H."/>
            <person name="Utterback T.R."/>
            <person name="Feldblyum T.V."/>
            <person name="Fraser C.M."/>
        </authorList>
    </citation>
    <scope>NUCLEOTIDE SEQUENCE [LARGE SCALE GENOMIC DNA]</scope>
    <source>
        <strain>34H / ATCC BAA-681</strain>
    </source>
</reference>
<proteinExistence type="inferred from homology"/>
<feature type="chain" id="PRO_0000238064" description="33 kDa chaperonin">
    <location>
        <begin position="1"/>
        <end position="290"/>
    </location>
</feature>
<feature type="disulfide bond" description="Redox-active" evidence="1">
    <location>
        <begin position="234"/>
        <end position="236"/>
    </location>
</feature>
<feature type="disulfide bond" description="Redox-active" evidence="1">
    <location>
        <begin position="267"/>
        <end position="270"/>
    </location>
</feature>
<sequence length="290" mass="32105">MSQFNVLNRYLFTDAHARGELVQLSSSFESIIKNHNYPVGVEKLLGELLCATCLLTATLKFEGDITVQLQGDGPVGYMSVSGNNKQQMRGIAKMAEETSADTLQTLIGKGTMIITIRPNAGEAYQGVVALDEESLADCLAHYFDVSEQIPTKIWLFCDTEQQLAAGALVQLLPDGDGSTENKEQQQSDFEHLCQLTNTIKSEEVFSLEAEALLYRLYHQEQVNIFEPQMVSYLCGCSADKCLSAISQIEPSEIKAILAEHGKISMTCDYCITTYDFDELSLKSFISKVNH</sequence>
<name>HSLO_COLP3</name>
<gene>
    <name evidence="1" type="primary">hslO</name>
    <name type="ordered locus">CPS_4594</name>
</gene>
<keyword id="KW-0143">Chaperone</keyword>
<keyword id="KW-0963">Cytoplasm</keyword>
<keyword id="KW-1015">Disulfide bond</keyword>
<keyword id="KW-0676">Redox-active center</keyword>
<keyword id="KW-0862">Zinc</keyword>